<proteinExistence type="inferred from homology"/>
<organism>
    <name type="scientific">Shewanella baltica (strain OS155 / ATCC BAA-1091)</name>
    <dbReference type="NCBI Taxonomy" id="325240"/>
    <lineage>
        <taxon>Bacteria</taxon>
        <taxon>Pseudomonadati</taxon>
        <taxon>Pseudomonadota</taxon>
        <taxon>Gammaproteobacteria</taxon>
        <taxon>Alteromonadales</taxon>
        <taxon>Shewanellaceae</taxon>
        <taxon>Shewanella</taxon>
    </lineage>
</organism>
<reference key="1">
    <citation type="submission" date="2007-02" db="EMBL/GenBank/DDBJ databases">
        <title>Complete sequence of chromosome of Shewanella baltica OS155.</title>
        <authorList>
            <consortium name="US DOE Joint Genome Institute"/>
            <person name="Copeland A."/>
            <person name="Lucas S."/>
            <person name="Lapidus A."/>
            <person name="Barry K."/>
            <person name="Detter J.C."/>
            <person name="Glavina del Rio T."/>
            <person name="Hammon N."/>
            <person name="Israni S."/>
            <person name="Dalin E."/>
            <person name="Tice H."/>
            <person name="Pitluck S."/>
            <person name="Sims D.R."/>
            <person name="Brettin T."/>
            <person name="Bruce D."/>
            <person name="Han C."/>
            <person name="Tapia R."/>
            <person name="Brainard J."/>
            <person name="Schmutz J."/>
            <person name="Larimer F."/>
            <person name="Land M."/>
            <person name="Hauser L."/>
            <person name="Kyrpides N."/>
            <person name="Mikhailova N."/>
            <person name="Brettar I."/>
            <person name="Klappenbach J."/>
            <person name="Konstantinidis K."/>
            <person name="Rodrigues J."/>
            <person name="Tiedje J."/>
            <person name="Richardson P."/>
        </authorList>
    </citation>
    <scope>NUCLEOTIDE SEQUENCE [LARGE SCALE GENOMIC DNA]</scope>
    <source>
        <strain>OS155 / ATCC BAA-1091</strain>
    </source>
</reference>
<evidence type="ECO:0000255" key="1">
    <source>
        <dbReference type="HAMAP-Rule" id="MF_00129"/>
    </source>
</evidence>
<dbReference type="EMBL" id="CP000563">
    <property type="protein sequence ID" value="ABN63838.1"/>
    <property type="molecule type" value="Genomic_DNA"/>
</dbReference>
<dbReference type="RefSeq" id="WP_011848296.1">
    <property type="nucleotide sequence ID" value="NC_009052.1"/>
</dbReference>
<dbReference type="SMR" id="A3DAS5"/>
<dbReference type="STRING" id="325240.Sbal_4377"/>
<dbReference type="KEGG" id="sbl:Sbal_4377"/>
<dbReference type="HOGENOM" id="CLU_007831_2_2_6"/>
<dbReference type="OrthoDB" id="9815560at2"/>
<dbReference type="Proteomes" id="UP000001557">
    <property type="component" value="Chromosome"/>
</dbReference>
<dbReference type="GO" id="GO:0005829">
    <property type="term" value="C:cytosol"/>
    <property type="evidence" value="ECO:0007669"/>
    <property type="project" value="TreeGrafter"/>
</dbReference>
<dbReference type="GO" id="GO:0050660">
    <property type="term" value="F:flavin adenine dinucleotide binding"/>
    <property type="evidence" value="ECO:0007669"/>
    <property type="project" value="UniProtKB-UniRule"/>
</dbReference>
<dbReference type="GO" id="GO:0030488">
    <property type="term" value="P:tRNA methylation"/>
    <property type="evidence" value="ECO:0007669"/>
    <property type="project" value="TreeGrafter"/>
</dbReference>
<dbReference type="GO" id="GO:0002098">
    <property type="term" value="P:tRNA wobble uridine modification"/>
    <property type="evidence" value="ECO:0007669"/>
    <property type="project" value="InterPro"/>
</dbReference>
<dbReference type="FunFam" id="1.10.10.1800:FF:000001">
    <property type="entry name" value="tRNA uridine 5-carboxymethylaminomethyl modification enzyme MnmG"/>
    <property type="match status" value="1"/>
</dbReference>
<dbReference type="FunFam" id="1.10.150.570:FF:000001">
    <property type="entry name" value="tRNA uridine 5-carboxymethylaminomethyl modification enzyme MnmG"/>
    <property type="match status" value="1"/>
</dbReference>
<dbReference type="FunFam" id="3.50.50.60:FF:000002">
    <property type="entry name" value="tRNA uridine 5-carboxymethylaminomethyl modification enzyme MnmG"/>
    <property type="match status" value="1"/>
</dbReference>
<dbReference type="FunFam" id="3.50.50.60:FF:000010">
    <property type="entry name" value="tRNA uridine 5-carboxymethylaminomethyl modification enzyme MnmG"/>
    <property type="match status" value="1"/>
</dbReference>
<dbReference type="Gene3D" id="3.50.50.60">
    <property type="entry name" value="FAD/NAD(P)-binding domain"/>
    <property type="match status" value="2"/>
</dbReference>
<dbReference type="Gene3D" id="1.10.150.570">
    <property type="entry name" value="GidA associated domain, C-terminal subdomain"/>
    <property type="match status" value="1"/>
</dbReference>
<dbReference type="Gene3D" id="1.10.10.1800">
    <property type="entry name" value="tRNA uridine 5-carboxymethylaminomethyl modification enzyme MnmG/GidA"/>
    <property type="match status" value="1"/>
</dbReference>
<dbReference type="HAMAP" id="MF_00129">
    <property type="entry name" value="MnmG_GidA"/>
    <property type="match status" value="1"/>
</dbReference>
<dbReference type="InterPro" id="IPR036188">
    <property type="entry name" value="FAD/NAD-bd_sf"/>
</dbReference>
<dbReference type="InterPro" id="IPR049312">
    <property type="entry name" value="GIDA_C_N"/>
</dbReference>
<dbReference type="InterPro" id="IPR004416">
    <property type="entry name" value="MnmG"/>
</dbReference>
<dbReference type="InterPro" id="IPR002218">
    <property type="entry name" value="MnmG-rel"/>
</dbReference>
<dbReference type="InterPro" id="IPR020595">
    <property type="entry name" value="MnmG-rel_CS"/>
</dbReference>
<dbReference type="InterPro" id="IPR026904">
    <property type="entry name" value="MnmG_C"/>
</dbReference>
<dbReference type="InterPro" id="IPR047001">
    <property type="entry name" value="MnmG_C_subdom"/>
</dbReference>
<dbReference type="InterPro" id="IPR044920">
    <property type="entry name" value="MnmG_C_subdom_sf"/>
</dbReference>
<dbReference type="InterPro" id="IPR040131">
    <property type="entry name" value="MnmG_N"/>
</dbReference>
<dbReference type="NCBIfam" id="TIGR00136">
    <property type="entry name" value="mnmG_gidA"/>
    <property type="match status" value="1"/>
</dbReference>
<dbReference type="PANTHER" id="PTHR11806">
    <property type="entry name" value="GLUCOSE INHIBITED DIVISION PROTEIN A"/>
    <property type="match status" value="1"/>
</dbReference>
<dbReference type="PANTHER" id="PTHR11806:SF0">
    <property type="entry name" value="PROTEIN MTO1 HOMOLOG, MITOCHONDRIAL"/>
    <property type="match status" value="1"/>
</dbReference>
<dbReference type="Pfam" id="PF01134">
    <property type="entry name" value="GIDA"/>
    <property type="match status" value="1"/>
</dbReference>
<dbReference type="Pfam" id="PF21680">
    <property type="entry name" value="GIDA_C_1st"/>
    <property type="match status" value="1"/>
</dbReference>
<dbReference type="Pfam" id="PF13932">
    <property type="entry name" value="SAM_GIDA_C"/>
    <property type="match status" value="1"/>
</dbReference>
<dbReference type="SMART" id="SM01228">
    <property type="entry name" value="GIDA_assoc_3"/>
    <property type="match status" value="1"/>
</dbReference>
<dbReference type="SUPFAM" id="SSF51905">
    <property type="entry name" value="FAD/NAD(P)-binding domain"/>
    <property type="match status" value="1"/>
</dbReference>
<dbReference type="PROSITE" id="PS01280">
    <property type="entry name" value="GIDA_1"/>
    <property type="match status" value="1"/>
</dbReference>
<dbReference type="PROSITE" id="PS01281">
    <property type="entry name" value="GIDA_2"/>
    <property type="match status" value="1"/>
</dbReference>
<sequence>MHFHERFDVIVVGGGHAGTEAALAAARMGSKTLLLTHNIDTLGQMSCNPAIGGIGKGHLVKEIDALGGAMAIATDYAGIQFRTLNSSKGPAVRATRAQADRALYRQKIQNILQNQPNLRIFQQAVDDLIVENHQVVGVVTQMGLAFESPAVVLTTGTFLSGKIHIGLENYSGGRAGDPPAIALANRLRELPIRVGRLKTGTPPRIDANTIDFSQMTEQKGDSPLPVMSFMGDVSHHPKQISCWITHTNEKTHEIIRGGLDRSPMYSGVIEGIGPRYCPSIEDKIHRFADKSSHQIFIEPEGLNTNEIYPNGISTSLPFDVQLNLVRSIKGMENAEIMRPGYAIEYDYFDPRDLKNSLETKAINGLFFAGQINGTTGYEEAGAQGLLAGMNASLQVQGKEAWCPRRDEAYLGVLVDDLSTLGTKEPYRMFTSRAEYRLLLREDNADIRLTAKGRELGLVDDARWAAFSEKLESIELELQRLRGQWVHPNSPLIHALNPHLNTPISREASFEELLRRPEMDYSKLMQIEGFGPGLEDPQAAEQVQIQVKYSGYIQRQQEEINKAVRNENTGLPLTLDYKEVPGLSNEVIAKLNNHKPETIGQASRISGITPAAISILLVHLKKRGLLRKSA</sequence>
<protein>
    <recommendedName>
        <fullName evidence="1">tRNA uridine 5-carboxymethylaminomethyl modification enzyme MnmG</fullName>
    </recommendedName>
    <alternativeName>
        <fullName evidence="1">Glucose-inhibited division protein A</fullName>
    </alternativeName>
</protein>
<feature type="chain" id="PRO_1000016669" description="tRNA uridine 5-carboxymethylaminomethyl modification enzyme MnmG">
    <location>
        <begin position="1"/>
        <end position="629"/>
    </location>
</feature>
<feature type="binding site" evidence="1">
    <location>
        <begin position="13"/>
        <end position="18"/>
    </location>
    <ligand>
        <name>FAD</name>
        <dbReference type="ChEBI" id="CHEBI:57692"/>
    </ligand>
</feature>
<feature type="binding site" evidence="1">
    <location>
        <begin position="273"/>
        <end position="287"/>
    </location>
    <ligand>
        <name>NAD(+)</name>
        <dbReference type="ChEBI" id="CHEBI:57540"/>
    </ligand>
</feature>
<comment type="function">
    <text evidence="1">NAD-binding protein involved in the addition of a carboxymethylaminomethyl (cmnm) group at the wobble position (U34) of certain tRNAs, forming tRNA-cmnm(5)s(2)U34.</text>
</comment>
<comment type="cofactor">
    <cofactor evidence="1">
        <name>FAD</name>
        <dbReference type="ChEBI" id="CHEBI:57692"/>
    </cofactor>
</comment>
<comment type="subunit">
    <text evidence="1">Homodimer. Heterotetramer of two MnmE and two MnmG subunits.</text>
</comment>
<comment type="subcellular location">
    <subcellularLocation>
        <location evidence="1">Cytoplasm</location>
    </subcellularLocation>
</comment>
<comment type="similarity">
    <text evidence="1">Belongs to the MnmG family.</text>
</comment>
<gene>
    <name evidence="1" type="primary">mnmG</name>
    <name evidence="1" type="synonym">gidA</name>
    <name type="ordered locus">Sbal_4377</name>
</gene>
<accession>A3DAS5</accession>
<keyword id="KW-0963">Cytoplasm</keyword>
<keyword id="KW-0274">FAD</keyword>
<keyword id="KW-0285">Flavoprotein</keyword>
<keyword id="KW-0520">NAD</keyword>
<keyword id="KW-1185">Reference proteome</keyword>
<keyword id="KW-0819">tRNA processing</keyword>
<name>MNMG_SHEB5</name>